<evidence type="ECO:0000250" key="1"/>
<evidence type="ECO:0000255" key="2">
    <source>
        <dbReference type="PROSITE-ProRule" id="PRU01319"/>
    </source>
</evidence>
<evidence type="ECO:0000305" key="3"/>
<gene>
    <name type="primary">rnhB</name>
    <name type="ordered locus">TC_0298</name>
</gene>
<protein>
    <recommendedName>
        <fullName>Ribonuclease HII</fullName>
        <shortName>RNase HII</shortName>
        <ecNumber>3.1.26.4</ecNumber>
    </recommendedName>
</protein>
<keyword id="KW-0963">Cytoplasm</keyword>
<keyword id="KW-0255">Endonuclease</keyword>
<keyword id="KW-0378">Hydrolase</keyword>
<keyword id="KW-0464">Manganese</keyword>
<keyword id="KW-0479">Metal-binding</keyword>
<keyword id="KW-0540">Nuclease</keyword>
<organism>
    <name type="scientific">Chlamydia muridarum (strain MoPn / Nigg)</name>
    <dbReference type="NCBI Taxonomy" id="243161"/>
    <lineage>
        <taxon>Bacteria</taxon>
        <taxon>Pseudomonadati</taxon>
        <taxon>Chlamydiota</taxon>
        <taxon>Chlamydiia</taxon>
        <taxon>Chlamydiales</taxon>
        <taxon>Chlamydiaceae</taxon>
        <taxon>Chlamydia/Chlamydophila group</taxon>
        <taxon>Chlamydia</taxon>
    </lineage>
</organism>
<dbReference type="EC" id="3.1.26.4"/>
<dbReference type="EMBL" id="AE002160">
    <property type="protein sequence ID" value="AAF73545.1"/>
    <property type="molecule type" value="Genomic_DNA"/>
</dbReference>
<dbReference type="RefSeq" id="WP_010230077.1">
    <property type="nucleotide sequence ID" value="NZ_CP063055.1"/>
</dbReference>
<dbReference type="SMR" id="Q9PL10"/>
<dbReference type="GeneID" id="1246468"/>
<dbReference type="KEGG" id="cmu:TC_0298"/>
<dbReference type="eggNOG" id="COG0164">
    <property type="taxonomic scope" value="Bacteria"/>
</dbReference>
<dbReference type="HOGENOM" id="CLU_036532_2_1_0"/>
<dbReference type="OrthoDB" id="9803420at2"/>
<dbReference type="Proteomes" id="UP000000800">
    <property type="component" value="Chromosome"/>
</dbReference>
<dbReference type="GO" id="GO:0005737">
    <property type="term" value="C:cytoplasm"/>
    <property type="evidence" value="ECO:0007669"/>
    <property type="project" value="UniProtKB-SubCell"/>
</dbReference>
<dbReference type="GO" id="GO:0032299">
    <property type="term" value="C:ribonuclease H2 complex"/>
    <property type="evidence" value="ECO:0007669"/>
    <property type="project" value="TreeGrafter"/>
</dbReference>
<dbReference type="GO" id="GO:0030145">
    <property type="term" value="F:manganese ion binding"/>
    <property type="evidence" value="ECO:0007669"/>
    <property type="project" value="UniProtKB-UniRule"/>
</dbReference>
<dbReference type="GO" id="GO:0003723">
    <property type="term" value="F:RNA binding"/>
    <property type="evidence" value="ECO:0007669"/>
    <property type="project" value="InterPro"/>
</dbReference>
<dbReference type="GO" id="GO:0004523">
    <property type="term" value="F:RNA-DNA hybrid ribonuclease activity"/>
    <property type="evidence" value="ECO:0007669"/>
    <property type="project" value="UniProtKB-UniRule"/>
</dbReference>
<dbReference type="GO" id="GO:0043137">
    <property type="term" value="P:DNA replication, removal of RNA primer"/>
    <property type="evidence" value="ECO:0007669"/>
    <property type="project" value="TreeGrafter"/>
</dbReference>
<dbReference type="GO" id="GO:0006298">
    <property type="term" value="P:mismatch repair"/>
    <property type="evidence" value="ECO:0007669"/>
    <property type="project" value="TreeGrafter"/>
</dbReference>
<dbReference type="CDD" id="cd07182">
    <property type="entry name" value="RNase_HII_bacteria_HII_like"/>
    <property type="match status" value="1"/>
</dbReference>
<dbReference type="FunFam" id="3.30.420.10:FF:000006">
    <property type="entry name" value="Ribonuclease HII"/>
    <property type="match status" value="1"/>
</dbReference>
<dbReference type="Gene3D" id="3.30.420.10">
    <property type="entry name" value="Ribonuclease H-like superfamily/Ribonuclease H"/>
    <property type="match status" value="1"/>
</dbReference>
<dbReference type="HAMAP" id="MF_00052_B">
    <property type="entry name" value="RNase_HII_B"/>
    <property type="match status" value="1"/>
</dbReference>
<dbReference type="InterPro" id="IPR022898">
    <property type="entry name" value="RNase_HII"/>
</dbReference>
<dbReference type="InterPro" id="IPR001352">
    <property type="entry name" value="RNase_HII/HIII"/>
</dbReference>
<dbReference type="InterPro" id="IPR024567">
    <property type="entry name" value="RNase_HII/HIII_dom"/>
</dbReference>
<dbReference type="InterPro" id="IPR012337">
    <property type="entry name" value="RNaseH-like_sf"/>
</dbReference>
<dbReference type="InterPro" id="IPR036397">
    <property type="entry name" value="RNaseH_sf"/>
</dbReference>
<dbReference type="NCBIfam" id="NF000594">
    <property type="entry name" value="PRK00015.1-1"/>
    <property type="match status" value="1"/>
</dbReference>
<dbReference type="NCBIfam" id="NF000595">
    <property type="entry name" value="PRK00015.1-3"/>
    <property type="match status" value="1"/>
</dbReference>
<dbReference type="PANTHER" id="PTHR10954">
    <property type="entry name" value="RIBONUCLEASE H2 SUBUNIT A"/>
    <property type="match status" value="1"/>
</dbReference>
<dbReference type="PANTHER" id="PTHR10954:SF18">
    <property type="entry name" value="RIBONUCLEASE HII"/>
    <property type="match status" value="1"/>
</dbReference>
<dbReference type="Pfam" id="PF01351">
    <property type="entry name" value="RNase_HII"/>
    <property type="match status" value="1"/>
</dbReference>
<dbReference type="SUPFAM" id="SSF53098">
    <property type="entry name" value="Ribonuclease H-like"/>
    <property type="match status" value="1"/>
</dbReference>
<dbReference type="PROSITE" id="PS51975">
    <property type="entry name" value="RNASE_H_2"/>
    <property type="match status" value="1"/>
</dbReference>
<sequence>MKSIVEQELLFREKSVFEDQAIKQGYSRIAGVDEAGRGPLAGPVVAGACILPGGKLFLGIDDSKKLSPKQRRYLYELLLEDPEVTCGVGVVSVERIDEINILEATKEAMVQAIASLRSTPDFLLVDGLFLPHEIPCLKIIKGDSRSVSIAAASIIAKEYRDELMRKLHSEYPEYGFDKHKGYGTVAHLQALKQFGPCVYHRKSFSPVKESIREGICQ</sequence>
<accession>Q9PL10</accession>
<proteinExistence type="inferred from homology"/>
<comment type="function">
    <text evidence="1">Endonuclease that specifically degrades the RNA of RNA-DNA hybrids.</text>
</comment>
<comment type="catalytic activity">
    <reaction>
        <text>Endonucleolytic cleavage to 5'-phosphomonoester.</text>
        <dbReference type="EC" id="3.1.26.4"/>
    </reaction>
</comment>
<comment type="cofactor">
    <cofactor evidence="1">
        <name>Mn(2+)</name>
        <dbReference type="ChEBI" id="CHEBI:29035"/>
    </cofactor>
    <cofactor evidence="1">
        <name>Mg(2+)</name>
        <dbReference type="ChEBI" id="CHEBI:18420"/>
    </cofactor>
    <text evidence="1">Manganese or magnesium. Binds 1 divalent metal ion per monomer in the absence of substrate. May bind a second metal ion after substrate binding.</text>
</comment>
<comment type="subcellular location">
    <subcellularLocation>
        <location evidence="3">Cytoplasm</location>
    </subcellularLocation>
</comment>
<comment type="similarity">
    <text evidence="3">Belongs to the RNase HII family.</text>
</comment>
<feature type="chain" id="PRO_0000111559" description="Ribonuclease HII">
    <location>
        <begin position="1"/>
        <end position="217"/>
    </location>
</feature>
<feature type="domain" description="RNase H type-2" evidence="2">
    <location>
        <begin position="27"/>
        <end position="216"/>
    </location>
</feature>
<feature type="binding site" evidence="1">
    <location>
        <position position="33"/>
    </location>
    <ligand>
        <name>a divalent metal cation</name>
        <dbReference type="ChEBI" id="CHEBI:60240"/>
    </ligand>
</feature>
<feature type="binding site" evidence="1">
    <location>
        <position position="34"/>
    </location>
    <ligand>
        <name>a divalent metal cation</name>
        <dbReference type="ChEBI" id="CHEBI:60240"/>
    </ligand>
</feature>
<feature type="binding site" evidence="1">
    <location>
        <position position="126"/>
    </location>
    <ligand>
        <name>a divalent metal cation</name>
        <dbReference type="ChEBI" id="CHEBI:60240"/>
    </ligand>
</feature>
<reference key="1">
    <citation type="journal article" date="2000" name="Nucleic Acids Res.">
        <title>Genome sequences of Chlamydia trachomatis MoPn and Chlamydia pneumoniae AR39.</title>
        <authorList>
            <person name="Read T.D."/>
            <person name="Brunham R.C."/>
            <person name="Shen C."/>
            <person name="Gill S.R."/>
            <person name="Heidelberg J.F."/>
            <person name="White O."/>
            <person name="Hickey E.K."/>
            <person name="Peterson J.D."/>
            <person name="Utterback T.R."/>
            <person name="Berry K.J."/>
            <person name="Bass S."/>
            <person name="Linher K.D."/>
            <person name="Weidman J.F."/>
            <person name="Khouri H.M."/>
            <person name="Craven B."/>
            <person name="Bowman C."/>
            <person name="Dodson R.J."/>
            <person name="Gwinn M.L."/>
            <person name="Nelson W.C."/>
            <person name="DeBoy R.T."/>
            <person name="Kolonay J.F."/>
            <person name="McClarty G."/>
            <person name="Salzberg S.L."/>
            <person name="Eisen J.A."/>
            <person name="Fraser C.M."/>
        </authorList>
    </citation>
    <scope>NUCLEOTIDE SEQUENCE [LARGE SCALE GENOMIC DNA]</scope>
    <source>
        <strain>MoPn / Nigg</strain>
    </source>
</reference>
<name>RNH2_CHLMU</name>